<comment type="catalytic activity">
    <reaction>
        <text>GTP + H2O = 7,8-dihydroneopterin 3'-triphosphate + formate + H(+)</text>
        <dbReference type="Rhea" id="RHEA:17473"/>
        <dbReference type="ChEBI" id="CHEBI:15377"/>
        <dbReference type="ChEBI" id="CHEBI:15378"/>
        <dbReference type="ChEBI" id="CHEBI:15740"/>
        <dbReference type="ChEBI" id="CHEBI:37565"/>
        <dbReference type="ChEBI" id="CHEBI:58462"/>
        <dbReference type="EC" id="3.5.4.16"/>
    </reaction>
</comment>
<comment type="pathway">
    <text>Cofactor biosynthesis; 7,8-dihydroneopterin triphosphate biosynthesis; 7,8-dihydroneopterin triphosphate from GTP: step 1/1.</text>
</comment>
<comment type="subunit">
    <text evidence="1">Toroid-shaped homodecamer, composed of two pentamers of five dimers.</text>
</comment>
<comment type="similarity">
    <text evidence="2">Belongs to the GTP cyclohydrolase I family.</text>
</comment>
<keyword id="KW-0342">GTP-binding</keyword>
<keyword id="KW-0378">Hydrolase</keyword>
<keyword id="KW-0479">Metal-binding</keyword>
<keyword id="KW-0547">Nucleotide-binding</keyword>
<keyword id="KW-0554">One-carbon metabolism</keyword>
<keyword id="KW-1185">Reference proteome</keyword>
<keyword id="KW-0862">Zinc</keyword>
<gene>
    <name type="primary">folE</name>
    <name type="ordered locus">HI_1447</name>
</gene>
<accession>P43866</accession>
<sequence length="218" mass="24945">MSKISLDALNVRNALIEKGIETPMIDPTQAKNERRESIAKHMHEVMKLIGLDLRDDSLEETPNRLAKMFIDEIFSGMDYANFPKMTKIKNQMKVSEMVQVNDITLTSTCEHHFVTIDGKVCVAYYPKDWVIGLSKINRIVSFFAQRPQVQERLTEQLLTAFQTILETDDVAVYVKATHFCVKARGIRDTNSYTVTSAYGGVFLEDRDTRKEFLATVQK</sequence>
<proteinExistence type="inferred from homology"/>
<dbReference type="EC" id="3.5.4.16"/>
<dbReference type="EMBL" id="L42023">
    <property type="protein sequence ID" value="AAC23097.1"/>
    <property type="molecule type" value="Genomic_DNA"/>
</dbReference>
<dbReference type="PIR" id="A64124">
    <property type="entry name" value="A64124"/>
</dbReference>
<dbReference type="RefSeq" id="NP_439599.1">
    <property type="nucleotide sequence ID" value="NC_000907.1"/>
</dbReference>
<dbReference type="SMR" id="P43866"/>
<dbReference type="STRING" id="71421.HI_1447"/>
<dbReference type="EnsemblBacteria" id="AAC23097">
    <property type="protein sequence ID" value="AAC23097"/>
    <property type="gene ID" value="HI_1447"/>
</dbReference>
<dbReference type="KEGG" id="hin:HI_1447"/>
<dbReference type="PATRIC" id="fig|71421.8.peg.1509"/>
<dbReference type="eggNOG" id="COG0302">
    <property type="taxonomic scope" value="Bacteria"/>
</dbReference>
<dbReference type="HOGENOM" id="CLU_049768_3_2_6"/>
<dbReference type="OrthoDB" id="9801207at2"/>
<dbReference type="PhylomeDB" id="P43866"/>
<dbReference type="BioCyc" id="HINF71421:G1GJ1-1473-MONOMER"/>
<dbReference type="UniPathway" id="UPA00848">
    <property type="reaction ID" value="UER00151"/>
</dbReference>
<dbReference type="Proteomes" id="UP000000579">
    <property type="component" value="Chromosome"/>
</dbReference>
<dbReference type="GO" id="GO:0005737">
    <property type="term" value="C:cytoplasm"/>
    <property type="evidence" value="ECO:0000318"/>
    <property type="project" value="GO_Central"/>
</dbReference>
<dbReference type="GO" id="GO:0005525">
    <property type="term" value="F:GTP binding"/>
    <property type="evidence" value="ECO:0000318"/>
    <property type="project" value="GO_Central"/>
</dbReference>
<dbReference type="GO" id="GO:0003934">
    <property type="term" value="F:GTP cyclohydrolase I activity"/>
    <property type="evidence" value="ECO:0000318"/>
    <property type="project" value="GO_Central"/>
</dbReference>
<dbReference type="GO" id="GO:0008270">
    <property type="term" value="F:zinc ion binding"/>
    <property type="evidence" value="ECO:0000318"/>
    <property type="project" value="GO_Central"/>
</dbReference>
<dbReference type="GO" id="GO:0006730">
    <property type="term" value="P:one-carbon metabolic process"/>
    <property type="evidence" value="ECO:0007669"/>
    <property type="project" value="UniProtKB-UniRule"/>
</dbReference>
<dbReference type="GO" id="GO:0006729">
    <property type="term" value="P:tetrahydrobiopterin biosynthetic process"/>
    <property type="evidence" value="ECO:0000318"/>
    <property type="project" value="GO_Central"/>
</dbReference>
<dbReference type="GO" id="GO:0046654">
    <property type="term" value="P:tetrahydrofolate biosynthetic process"/>
    <property type="evidence" value="ECO:0007669"/>
    <property type="project" value="UniProtKB-UniRule"/>
</dbReference>
<dbReference type="CDD" id="cd00642">
    <property type="entry name" value="GTP_cyclohydro1"/>
    <property type="match status" value="1"/>
</dbReference>
<dbReference type="FunFam" id="3.30.1130.10:FF:000001">
    <property type="entry name" value="GTP cyclohydrolase 1"/>
    <property type="match status" value="1"/>
</dbReference>
<dbReference type="Gene3D" id="1.10.286.10">
    <property type="match status" value="1"/>
</dbReference>
<dbReference type="Gene3D" id="3.30.1130.10">
    <property type="match status" value="1"/>
</dbReference>
<dbReference type="HAMAP" id="MF_00223">
    <property type="entry name" value="FolE"/>
    <property type="match status" value="1"/>
</dbReference>
<dbReference type="InterPro" id="IPR043133">
    <property type="entry name" value="GTP-CH-I_C/QueF"/>
</dbReference>
<dbReference type="InterPro" id="IPR043134">
    <property type="entry name" value="GTP-CH-I_N"/>
</dbReference>
<dbReference type="InterPro" id="IPR001474">
    <property type="entry name" value="GTP_CycHdrlase_I"/>
</dbReference>
<dbReference type="InterPro" id="IPR018234">
    <property type="entry name" value="GTP_CycHdrlase_I_CS"/>
</dbReference>
<dbReference type="InterPro" id="IPR020602">
    <property type="entry name" value="GTP_CycHdrlase_I_dom"/>
</dbReference>
<dbReference type="NCBIfam" id="TIGR00063">
    <property type="entry name" value="folE"/>
    <property type="match status" value="1"/>
</dbReference>
<dbReference type="NCBIfam" id="NF006824">
    <property type="entry name" value="PRK09347.1-1"/>
    <property type="match status" value="1"/>
</dbReference>
<dbReference type="NCBIfam" id="NF006826">
    <property type="entry name" value="PRK09347.1-3"/>
    <property type="match status" value="1"/>
</dbReference>
<dbReference type="PANTHER" id="PTHR11109:SF7">
    <property type="entry name" value="GTP CYCLOHYDROLASE 1"/>
    <property type="match status" value="1"/>
</dbReference>
<dbReference type="PANTHER" id="PTHR11109">
    <property type="entry name" value="GTP CYCLOHYDROLASE I"/>
    <property type="match status" value="1"/>
</dbReference>
<dbReference type="Pfam" id="PF01227">
    <property type="entry name" value="GTP_cyclohydroI"/>
    <property type="match status" value="1"/>
</dbReference>
<dbReference type="SUPFAM" id="SSF55620">
    <property type="entry name" value="Tetrahydrobiopterin biosynthesis enzymes-like"/>
    <property type="match status" value="1"/>
</dbReference>
<dbReference type="PROSITE" id="PS00859">
    <property type="entry name" value="GTP_CYCLOHYDROL_1_1"/>
    <property type="match status" value="1"/>
</dbReference>
<dbReference type="PROSITE" id="PS00860">
    <property type="entry name" value="GTP_CYCLOHYDROL_1_2"/>
    <property type="match status" value="1"/>
</dbReference>
<organism>
    <name type="scientific">Haemophilus influenzae (strain ATCC 51907 / DSM 11121 / KW20 / Rd)</name>
    <dbReference type="NCBI Taxonomy" id="71421"/>
    <lineage>
        <taxon>Bacteria</taxon>
        <taxon>Pseudomonadati</taxon>
        <taxon>Pseudomonadota</taxon>
        <taxon>Gammaproteobacteria</taxon>
        <taxon>Pasteurellales</taxon>
        <taxon>Pasteurellaceae</taxon>
        <taxon>Haemophilus</taxon>
    </lineage>
</organism>
<name>GCH1_HAEIN</name>
<feature type="chain" id="PRO_0000119411" description="GTP cyclohydrolase 1">
    <location>
        <begin position="1"/>
        <end position="218"/>
    </location>
</feature>
<feature type="binding site" evidence="1">
    <location>
        <position position="109"/>
    </location>
    <ligand>
        <name>Zn(2+)</name>
        <dbReference type="ChEBI" id="CHEBI:29105"/>
    </ligand>
</feature>
<feature type="binding site" evidence="1">
    <location>
        <position position="112"/>
    </location>
    <ligand>
        <name>Zn(2+)</name>
        <dbReference type="ChEBI" id="CHEBI:29105"/>
    </ligand>
</feature>
<feature type="binding site" evidence="1">
    <location>
        <position position="180"/>
    </location>
    <ligand>
        <name>Zn(2+)</name>
        <dbReference type="ChEBI" id="CHEBI:29105"/>
    </ligand>
</feature>
<protein>
    <recommendedName>
        <fullName>GTP cyclohydrolase 1</fullName>
        <ecNumber>3.5.4.16</ecNumber>
    </recommendedName>
    <alternativeName>
        <fullName>GTP cyclohydrolase I</fullName>
        <shortName>GTP-CH-I</shortName>
    </alternativeName>
</protein>
<evidence type="ECO:0000250" key="1"/>
<evidence type="ECO:0000305" key="2"/>
<reference key="1">
    <citation type="journal article" date="1995" name="Science">
        <title>Whole-genome random sequencing and assembly of Haemophilus influenzae Rd.</title>
        <authorList>
            <person name="Fleischmann R.D."/>
            <person name="Adams M.D."/>
            <person name="White O."/>
            <person name="Clayton R.A."/>
            <person name="Kirkness E.F."/>
            <person name="Kerlavage A.R."/>
            <person name="Bult C.J."/>
            <person name="Tomb J.-F."/>
            <person name="Dougherty B.A."/>
            <person name="Merrick J.M."/>
            <person name="McKenney K."/>
            <person name="Sutton G.G."/>
            <person name="FitzHugh W."/>
            <person name="Fields C.A."/>
            <person name="Gocayne J.D."/>
            <person name="Scott J.D."/>
            <person name="Shirley R."/>
            <person name="Liu L.-I."/>
            <person name="Glodek A."/>
            <person name="Kelley J.M."/>
            <person name="Weidman J.F."/>
            <person name="Phillips C.A."/>
            <person name="Spriggs T."/>
            <person name="Hedblom E."/>
            <person name="Cotton M.D."/>
            <person name="Utterback T.R."/>
            <person name="Hanna M.C."/>
            <person name="Nguyen D.T."/>
            <person name="Saudek D.M."/>
            <person name="Brandon R.C."/>
            <person name="Fine L.D."/>
            <person name="Fritchman J.L."/>
            <person name="Fuhrmann J.L."/>
            <person name="Geoghagen N.S.M."/>
            <person name="Gnehm C.L."/>
            <person name="McDonald L.A."/>
            <person name="Small K.V."/>
            <person name="Fraser C.M."/>
            <person name="Smith H.O."/>
            <person name="Venter J.C."/>
        </authorList>
    </citation>
    <scope>NUCLEOTIDE SEQUENCE [LARGE SCALE GENOMIC DNA]</scope>
    <source>
        <strain>ATCC 51907 / DSM 11121 / KW20 / Rd</strain>
    </source>
</reference>